<keyword id="KW-0687">Ribonucleoprotein</keyword>
<keyword id="KW-0689">Ribosomal protein</keyword>
<gene>
    <name evidence="1" type="primary">rpmC</name>
    <name type="ordered locus">BCAH187_A0149</name>
</gene>
<accession>B7HQV2</accession>
<protein>
    <recommendedName>
        <fullName evidence="1">Large ribosomal subunit protein uL29</fullName>
    </recommendedName>
    <alternativeName>
        <fullName evidence="2">50S ribosomal protein L29</fullName>
    </alternativeName>
</protein>
<reference key="1">
    <citation type="submission" date="2008-10" db="EMBL/GenBank/DDBJ databases">
        <title>Genome sequence of Bacillus cereus AH187.</title>
        <authorList>
            <person name="Dodson R.J."/>
            <person name="Durkin A.S."/>
            <person name="Rosovitz M.J."/>
            <person name="Rasko D.A."/>
            <person name="Kolsto A.B."/>
            <person name="Okstad O.A."/>
            <person name="Ravel J."/>
            <person name="Sutton G."/>
        </authorList>
    </citation>
    <scope>NUCLEOTIDE SEQUENCE [LARGE SCALE GENOMIC DNA]</scope>
    <source>
        <strain>AH187</strain>
    </source>
</reference>
<evidence type="ECO:0000255" key="1">
    <source>
        <dbReference type="HAMAP-Rule" id="MF_00374"/>
    </source>
</evidence>
<evidence type="ECO:0000305" key="2"/>
<name>RL29_BACC7</name>
<sequence length="66" mass="7768">MKTNDIRELTTAEIETKVKALKEELFNLRFQLATGQLENPTRIREVRKAIARMKTVVREREIGINR</sequence>
<proteinExistence type="inferred from homology"/>
<comment type="similarity">
    <text evidence="1">Belongs to the universal ribosomal protein uL29 family.</text>
</comment>
<organism>
    <name type="scientific">Bacillus cereus (strain AH187)</name>
    <dbReference type="NCBI Taxonomy" id="405534"/>
    <lineage>
        <taxon>Bacteria</taxon>
        <taxon>Bacillati</taxon>
        <taxon>Bacillota</taxon>
        <taxon>Bacilli</taxon>
        <taxon>Bacillales</taxon>
        <taxon>Bacillaceae</taxon>
        <taxon>Bacillus</taxon>
        <taxon>Bacillus cereus group</taxon>
    </lineage>
</organism>
<feature type="chain" id="PRO_1000121731" description="Large ribosomal subunit protein uL29">
    <location>
        <begin position="1"/>
        <end position="66"/>
    </location>
</feature>
<dbReference type="EMBL" id="CP001177">
    <property type="protein sequence ID" value="ACJ80723.1"/>
    <property type="molecule type" value="Genomic_DNA"/>
</dbReference>
<dbReference type="SMR" id="B7HQV2"/>
<dbReference type="KEGG" id="bcr:BCAH187_A0149"/>
<dbReference type="HOGENOM" id="CLU_158491_5_2_9"/>
<dbReference type="Proteomes" id="UP000002214">
    <property type="component" value="Chromosome"/>
</dbReference>
<dbReference type="GO" id="GO:0022625">
    <property type="term" value="C:cytosolic large ribosomal subunit"/>
    <property type="evidence" value="ECO:0007669"/>
    <property type="project" value="TreeGrafter"/>
</dbReference>
<dbReference type="GO" id="GO:0003735">
    <property type="term" value="F:structural constituent of ribosome"/>
    <property type="evidence" value="ECO:0007669"/>
    <property type="project" value="InterPro"/>
</dbReference>
<dbReference type="GO" id="GO:0006412">
    <property type="term" value="P:translation"/>
    <property type="evidence" value="ECO:0007669"/>
    <property type="project" value="UniProtKB-UniRule"/>
</dbReference>
<dbReference type="CDD" id="cd00427">
    <property type="entry name" value="Ribosomal_L29_HIP"/>
    <property type="match status" value="1"/>
</dbReference>
<dbReference type="FunFam" id="1.10.287.310:FF:000001">
    <property type="entry name" value="50S ribosomal protein L29"/>
    <property type="match status" value="1"/>
</dbReference>
<dbReference type="Gene3D" id="1.10.287.310">
    <property type="match status" value="1"/>
</dbReference>
<dbReference type="HAMAP" id="MF_00374">
    <property type="entry name" value="Ribosomal_uL29"/>
    <property type="match status" value="1"/>
</dbReference>
<dbReference type="InterPro" id="IPR050063">
    <property type="entry name" value="Ribosomal_protein_uL29"/>
</dbReference>
<dbReference type="InterPro" id="IPR001854">
    <property type="entry name" value="Ribosomal_uL29"/>
</dbReference>
<dbReference type="InterPro" id="IPR018254">
    <property type="entry name" value="Ribosomal_uL29_CS"/>
</dbReference>
<dbReference type="InterPro" id="IPR036049">
    <property type="entry name" value="Ribosomal_uL29_sf"/>
</dbReference>
<dbReference type="NCBIfam" id="TIGR00012">
    <property type="entry name" value="L29"/>
    <property type="match status" value="1"/>
</dbReference>
<dbReference type="PANTHER" id="PTHR10916">
    <property type="entry name" value="60S RIBOSOMAL PROTEIN L35/50S RIBOSOMAL PROTEIN L29"/>
    <property type="match status" value="1"/>
</dbReference>
<dbReference type="PANTHER" id="PTHR10916:SF0">
    <property type="entry name" value="LARGE RIBOSOMAL SUBUNIT PROTEIN UL29C"/>
    <property type="match status" value="1"/>
</dbReference>
<dbReference type="Pfam" id="PF00831">
    <property type="entry name" value="Ribosomal_L29"/>
    <property type="match status" value="1"/>
</dbReference>
<dbReference type="SUPFAM" id="SSF46561">
    <property type="entry name" value="Ribosomal protein L29 (L29p)"/>
    <property type="match status" value="1"/>
</dbReference>
<dbReference type="PROSITE" id="PS00579">
    <property type="entry name" value="RIBOSOMAL_L29"/>
    <property type="match status" value="1"/>
</dbReference>